<accession>Q0E474</accession>
<accession>A0A0P0VEE4</accession>
<accession>Q6Z6I8</accession>
<gene>
    <name type="primary">CYCT1-1</name>
    <name type="ordered locus">Os02g0133000</name>
    <name type="ordered locus">LOC_Os02g04010</name>
    <name type="ORF">OsJ_005122</name>
    <name type="ORF">P0030G11.11</name>
</gene>
<organism>
    <name type="scientific">Oryza sativa subsp. japonica</name>
    <name type="common">Rice</name>
    <dbReference type="NCBI Taxonomy" id="39947"/>
    <lineage>
        <taxon>Eukaryota</taxon>
        <taxon>Viridiplantae</taxon>
        <taxon>Streptophyta</taxon>
        <taxon>Embryophyta</taxon>
        <taxon>Tracheophyta</taxon>
        <taxon>Spermatophyta</taxon>
        <taxon>Magnoliopsida</taxon>
        <taxon>Liliopsida</taxon>
        <taxon>Poales</taxon>
        <taxon>Poaceae</taxon>
        <taxon>BOP clade</taxon>
        <taxon>Oryzoideae</taxon>
        <taxon>Oryzeae</taxon>
        <taxon>Oryzinae</taxon>
        <taxon>Oryza</taxon>
        <taxon>Oryza sativa</taxon>
    </lineage>
</organism>
<protein>
    <recommendedName>
        <fullName>Cyclin-T1-1</fullName>
        <shortName>CycT1;1</shortName>
    </recommendedName>
</protein>
<evidence type="ECO:0000305" key="1"/>
<sequence length="446" mass="50775">MGEGAAGSWYVTRDEVERGSPSRRDGVGAAKEAELRATYCSFIRDVGLRLQLPQVTIATATLLCHRFYLRQSHAKNEWQTVATVCVFLASKIEDTPCPLQRVIIVAYETMYRKDCNAAHRIYQKEVLEKQKELILVGETLLLSTIRFDFNIQHPYEPLKLALKKLGIFQMEVKQVAVNLINDAIRTTLVVQFKPHYIAAGSLYLAAKFNNFRLPSDGKVWWHEFDVAPKQLQAVIQQMTELFMGRNPCSMGPAIRPPPTPSLMERQQVIRPPPTPTLMERQPIIRPLPTPTLMENQHITHSLGAVMRHTHSSIRSLSNNFDREASRSLPLNIPANRKSTVCPARNEGNQSLRMHMGHSNGSDARFEKQYSRGALKADHVYHVVSGQKDLHVTGIRDLVRQKRTFHEVGEHPAPIDKSDTKSWIRKRHGRNVIVFDTKSSSWKKQKL</sequence>
<dbReference type="EMBL" id="AP004997">
    <property type="protein sequence ID" value="BAD07997.1"/>
    <property type="molecule type" value="Genomic_DNA"/>
</dbReference>
<dbReference type="EMBL" id="AP008208">
    <property type="protein sequence ID" value="BAF07714.2"/>
    <property type="molecule type" value="Genomic_DNA"/>
</dbReference>
<dbReference type="EMBL" id="AP014958">
    <property type="protein sequence ID" value="BAS76837.1"/>
    <property type="molecule type" value="Genomic_DNA"/>
</dbReference>
<dbReference type="EMBL" id="CM000139">
    <property type="protein sequence ID" value="EAZ21639.1"/>
    <property type="molecule type" value="Genomic_DNA"/>
</dbReference>
<dbReference type="RefSeq" id="XP_015627068.1">
    <property type="nucleotide sequence ID" value="XM_015771582.1"/>
</dbReference>
<dbReference type="SMR" id="Q0E474"/>
<dbReference type="FunCoup" id="Q0E474">
    <property type="interactions" value="914"/>
</dbReference>
<dbReference type="STRING" id="39947.Q0E474"/>
<dbReference type="PaxDb" id="39947-Q0E474"/>
<dbReference type="EnsemblPlants" id="Os02t0133000-00">
    <property type="protein sequence ID" value="Os02t0133000-00"/>
    <property type="gene ID" value="Os02g0133000"/>
</dbReference>
<dbReference type="Gramene" id="Os02t0133000-00">
    <property type="protein sequence ID" value="Os02t0133000-00"/>
    <property type="gene ID" value="Os02g0133000"/>
</dbReference>
<dbReference type="KEGG" id="dosa:Os02g0133000"/>
<dbReference type="eggNOG" id="KOG0834">
    <property type="taxonomic scope" value="Eukaryota"/>
</dbReference>
<dbReference type="HOGENOM" id="CLU_022000_8_2_1"/>
<dbReference type="InParanoid" id="Q0E474"/>
<dbReference type="OMA" id="NGSDARF"/>
<dbReference type="OrthoDB" id="10264655at2759"/>
<dbReference type="Proteomes" id="UP000000763">
    <property type="component" value="Chromosome 2"/>
</dbReference>
<dbReference type="Proteomes" id="UP000007752">
    <property type="component" value="Chromosome 2"/>
</dbReference>
<dbReference type="Proteomes" id="UP000059680">
    <property type="component" value="Chromosome 2"/>
</dbReference>
<dbReference type="GO" id="GO:0008024">
    <property type="term" value="C:cyclin/CDK positive transcription elongation factor complex"/>
    <property type="evidence" value="ECO:0000318"/>
    <property type="project" value="GO_Central"/>
</dbReference>
<dbReference type="GO" id="GO:0005634">
    <property type="term" value="C:nucleus"/>
    <property type="evidence" value="ECO:0000318"/>
    <property type="project" value="GO_Central"/>
</dbReference>
<dbReference type="GO" id="GO:0061575">
    <property type="term" value="F:cyclin-dependent protein serine/threonine kinase activator activity"/>
    <property type="evidence" value="ECO:0000318"/>
    <property type="project" value="GO_Central"/>
</dbReference>
<dbReference type="GO" id="GO:0051301">
    <property type="term" value="P:cell division"/>
    <property type="evidence" value="ECO:0007669"/>
    <property type="project" value="UniProtKB-KW"/>
</dbReference>
<dbReference type="GO" id="GO:0032786">
    <property type="term" value="P:positive regulation of DNA-templated transcription, elongation"/>
    <property type="evidence" value="ECO:0000318"/>
    <property type="project" value="GO_Central"/>
</dbReference>
<dbReference type="GO" id="GO:0045944">
    <property type="term" value="P:positive regulation of transcription by RNA polymerase II"/>
    <property type="evidence" value="ECO:0000318"/>
    <property type="project" value="GO_Central"/>
</dbReference>
<dbReference type="FunFam" id="1.10.472.10:FF:000081">
    <property type="entry name" value="Cyclin family protein"/>
    <property type="match status" value="1"/>
</dbReference>
<dbReference type="FunFam" id="1.10.472.10:FF:000079">
    <property type="entry name" value="Putative cyclin-T1 family protein"/>
    <property type="match status" value="1"/>
</dbReference>
<dbReference type="Gene3D" id="1.10.472.10">
    <property type="entry name" value="Cyclin-like"/>
    <property type="match status" value="2"/>
</dbReference>
<dbReference type="InterPro" id="IPR013763">
    <property type="entry name" value="Cyclin-like_dom"/>
</dbReference>
<dbReference type="InterPro" id="IPR036915">
    <property type="entry name" value="Cyclin-like_sf"/>
</dbReference>
<dbReference type="InterPro" id="IPR043198">
    <property type="entry name" value="Cyclin/Ssn8"/>
</dbReference>
<dbReference type="InterPro" id="IPR006671">
    <property type="entry name" value="Cyclin_N"/>
</dbReference>
<dbReference type="PANTHER" id="PTHR10026">
    <property type="entry name" value="CYCLIN"/>
    <property type="match status" value="1"/>
</dbReference>
<dbReference type="Pfam" id="PF00134">
    <property type="entry name" value="Cyclin_N"/>
    <property type="match status" value="1"/>
</dbReference>
<dbReference type="SMART" id="SM00385">
    <property type="entry name" value="CYCLIN"/>
    <property type="match status" value="2"/>
</dbReference>
<dbReference type="SUPFAM" id="SSF47954">
    <property type="entry name" value="Cyclin-like"/>
    <property type="match status" value="2"/>
</dbReference>
<name>CCT11_ORYSJ</name>
<feature type="chain" id="PRO_0000287058" description="Cyclin-T1-1">
    <location>
        <begin position="1"/>
        <end position="446"/>
    </location>
</feature>
<proteinExistence type="inferred from homology"/>
<comment type="similarity">
    <text evidence="1">Belongs to the cyclin family. Cyclin T subfamily.</text>
</comment>
<reference key="1">
    <citation type="journal article" date="2005" name="Nature">
        <title>The map-based sequence of the rice genome.</title>
        <authorList>
            <consortium name="International rice genome sequencing project (IRGSP)"/>
        </authorList>
    </citation>
    <scope>NUCLEOTIDE SEQUENCE [LARGE SCALE GENOMIC DNA]</scope>
    <source>
        <strain>cv. Nipponbare</strain>
    </source>
</reference>
<reference key="2">
    <citation type="journal article" date="2008" name="Nucleic Acids Res.">
        <title>The rice annotation project database (RAP-DB): 2008 update.</title>
        <authorList>
            <consortium name="The rice annotation project (RAP)"/>
        </authorList>
    </citation>
    <scope>GENOME REANNOTATION</scope>
    <source>
        <strain>cv. Nipponbare</strain>
    </source>
</reference>
<reference key="3">
    <citation type="journal article" date="2013" name="Rice">
        <title>Improvement of the Oryza sativa Nipponbare reference genome using next generation sequence and optical map data.</title>
        <authorList>
            <person name="Kawahara Y."/>
            <person name="de la Bastide M."/>
            <person name="Hamilton J.P."/>
            <person name="Kanamori H."/>
            <person name="McCombie W.R."/>
            <person name="Ouyang S."/>
            <person name="Schwartz D.C."/>
            <person name="Tanaka T."/>
            <person name="Wu J."/>
            <person name="Zhou S."/>
            <person name="Childs K.L."/>
            <person name="Davidson R.M."/>
            <person name="Lin H."/>
            <person name="Quesada-Ocampo L."/>
            <person name="Vaillancourt B."/>
            <person name="Sakai H."/>
            <person name="Lee S.S."/>
            <person name="Kim J."/>
            <person name="Numa H."/>
            <person name="Itoh T."/>
            <person name="Buell C.R."/>
            <person name="Matsumoto T."/>
        </authorList>
    </citation>
    <scope>GENOME REANNOTATION</scope>
    <source>
        <strain>cv. Nipponbare</strain>
    </source>
</reference>
<reference key="4">
    <citation type="journal article" date="2005" name="PLoS Biol.">
        <title>The genomes of Oryza sativa: a history of duplications.</title>
        <authorList>
            <person name="Yu J."/>
            <person name="Wang J."/>
            <person name="Lin W."/>
            <person name="Li S."/>
            <person name="Li H."/>
            <person name="Zhou J."/>
            <person name="Ni P."/>
            <person name="Dong W."/>
            <person name="Hu S."/>
            <person name="Zeng C."/>
            <person name="Zhang J."/>
            <person name="Zhang Y."/>
            <person name="Li R."/>
            <person name="Xu Z."/>
            <person name="Li S."/>
            <person name="Li X."/>
            <person name="Zheng H."/>
            <person name="Cong L."/>
            <person name="Lin L."/>
            <person name="Yin J."/>
            <person name="Geng J."/>
            <person name="Li G."/>
            <person name="Shi J."/>
            <person name="Liu J."/>
            <person name="Lv H."/>
            <person name="Li J."/>
            <person name="Wang J."/>
            <person name="Deng Y."/>
            <person name="Ran L."/>
            <person name="Shi X."/>
            <person name="Wang X."/>
            <person name="Wu Q."/>
            <person name="Li C."/>
            <person name="Ren X."/>
            <person name="Wang J."/>
            <person name="Wang X."/>
            <person name="Li D."/>
            <person name="Liu D."/>
            <person name="Zhang X."/>
            <person name="Ji Z."/>
            <person name="Zhao W."/>
            <person name="Sun Y."/>
            <person name="Zhang Z."/>
            <person name="Bao J."/>
            <person name="Han Y."/>
            <person name="Dong L."/>
            <person name="Ji J."/>
            <person name="Chen P."/>
            <person name="Wu S."/>
            <person name="Liu J."/>
            <person name="Xiao Y."/>
            <person name="Bu D."/>
            <person name="Tan J."/>
            <person name="Yang L."/>
            <person name="Ye C."/>
            <person name="Zhang J."/>
            <person name="Xu J."/>
            <person name="Zhou Y."/>
            <person name="Yu Y."/>
            <person name="Zhang B."/>
            <person name="Zhuang S."/>
            <person name="Wei H."/>
            <person name="Liu B."/>
            <person name="Lei M."/>
            <person name="Yu H."/>
            <person name="Li Y."/>
            <person name="Xu H."/>
            <person name="Wei S."/>
            <person name="He X."/>
            <person name="Fang L."/>
            <person name="Zhang Z."/>
            <person name="Zhang Y."/>
            <person name="Huang X."/>
            <person name="Su Z."/>
            <person name="Tong W."/>
            <person name="Li J."/>
            <person name="Tong Z."/>
            <person name="Li S."/>
            <person name="Ye J."/>
            <person name="Wang L."/>
            <person name="Fang L."/>
            <person name="Lei T."/>
            <person name="Chen C.-S."/>
            <person name="Chen H.-C."/>
            <person name="Xu Z."/>
            <person name="Li H."/>
            <person name="Huang H."/>
            <person name="Zhang F."/>
            <person name="Xu H."/>
            <person name="Li N."/>
            <person name="Zhao C."/>
            <person name="Li S."/>
            <person name="Dong L."/>
            <person name="Huang Y."/>
            <person name="Li L."/>
            <person name="Xi Y."/>
            <person name="Qi Q."/>
            <person name="Li W."/>
            <person name="Zhang B."/>
            <person name="Hu W."/>
            <person name="Zhang Y."/>
            <person name="Tian X."/>
            <person name="Jiao Y."/>
            <person name="Liang X."/>
            <person name="Jin J."/>
            <person name="Gao L."/>
            <person name="Zheng W."/>
            <person name="Hao B."/>
            <person name="Liu S.-M."/>
            <person name="Wang W."/>
            <person name="Yuan L."/>
            <person name="Cao M."/>
            <person name="McDermott J."/>
            <person name="Samudrala R."/>
            <person name="Wang J."/>
            <person name="Wong G.K.-S."/>
            <person name="Yang H."/>
        </authorList>
    </citation>
    <scope>NUCLEOTIDE SEQUENCE [LARGE SCALE GENOMIC DNA]</scope>
    <source>
        <strain>cv. Nipponbare</strain>
    </source>
</reference>
<reference key="5">
    <citation type="journal article" date="2006" name="Mol. Genet. Genomics">
        <title>Genome-wide analysis of cyclin family in rice (Oryza sativa L.).</title>
        <authorList>
            <person name="La H."/>
            <person name="Li J."/>
            <person name="Ji Z."/>
            <person name="Cheng Y."/>
            <person name="Li X."/>
            <person name="Jiang S."/>
            <person name="Venkatesh P.N."/>
            <person name="Ramachandran S."/>
        </authorList>
    </citation>
    <scope>GENE FAMILY</scope>
    <scope>NOMENCLATURE</scope>
</reference>
<keyword id="KW-0131">Cell cycle</keyword>
<keyword id="KW-0132">Cell division</keyword>
<keyword id="KW-0195">Cyclin</keyword>
<keyword id="KW-1185">Reference proteome</keyword>